<comment type="function">
    <text evidence="1">Catalyzes the transfer of the phosphoribosyl group of 5-phosphorylribose-1-pyrophosphate (PRPP) to anthranilate to yield N-(5'-phosphoribosyl)-anthranilate (PRA).</text>
</comment>
<comment type="catalytic activity">
    <reaction evidence="1">
        <text>N-(5-phospho-beta-D-ribosyl)anthranilate + diphosphate = 5-phospho-alpha-D-ribose 1-diphosphate + anthranilate</text>
        <dbReference type="Rhea" id="RHEA:11768"/>
        <dbReference type="ChEBI" id="CHEBI:16567"/>
        <dbReference type="ChEBI" id="CHEBI:18277"/>
        <dbReference type="ChEBI" id="CHEBI:33019"/>
        <dbReference type="ChEBI" id="CHEBI:58017"/>
        <dbReference type="EC" id="2.4.2.18"/>
    </reaction>
</comment>
<comment type="cofactor">
    <cofactor evidence="1">
        <name>Mg(2+)</name>
        <dbReference type="ChEBI" id="CHEBI:18420"/>
    </cofactor>
    <text evidence="1">Binds 2 magnesium ions per monomer.</text>
</comment>
<comment type="pathway">
    <text evidence="1">Amino-acid biosynthesis; L-tryptophan biosynthesis; L-tryptophan from chorismate: step 2/5.</text>
</comment>
<comment type="subunit">
    <text evidence="1">Homodimer.</text>
</comment>
<comment type="similarity">
    <text evidence="1">Belongs to the anthranilate phosphoribosyltransferase family.</text>
</comment>
<accession>Q0B006</accession>
<keyword id="KW-0028">Amino-acid biosynthesis</keyword>
<keyword id="KW-0057">Aromatic amino acid biosynthesis</keyword>
<keyword id="KW-0328">Glycosyltransferase</keyword>
<keyword id="KW-0460">Magnesium</keyword>
<keyword id="KW-0479">Metal-binding</keyword>
<keyword id="KW-1185">Reference proteome</keyword>
<keyword id="KW-0808">Transferase</keyword>
<keyword id="KW-0822">Tryptophan biosynthesis</keyword>
<evidence type="ECO:0000255" key="1">
    <source>
        <dbReference type="HAMAP-Rule" id="MF_00211"/>
    </source>
</evidence>
<protein>
    <recommendedName>
        <fullName evidence="1">Anthranilate phosphoribosyltransferase</fullName>
        <ecNumber evidence="1">2.4.2.18</ecNumber>
    </recommendedName>
</protein>
<proteinExistence type="inferred from homology"/>
<name>TRPD_SYNWW</name>
<feature type="chain" id="PRO_0000325475" description="Anthranilate phosphoribosyltransferase">
    <location>
        <begin position="1"/>
        <end position="340"/>
    </location>
</feature>
<feature type="binding site" evidence="1">
    <location>
        <position position="79"/>
    </location>
    <ligand>
        <name>5-phospho-alpha-D-ribose 1-diphosphate</name>
        <dbReference type="ChEBI" id="CHEBI:58017"/>
    </ligand>
</feature>
<feature type="binding site" evidence="1">
    <location>
        <position position="79"/>
    </location>
    <ligand>
        <name>anthranilate</name>
        <dbReference type="ChEBI" id="CHEBI:16567"/>
        <label>1</label>
    </ligand>
</feature>
<feature type="binding site" evidence="1">
    <location>
        <begin position="82"/>
        <end position="83"/>
    </location>
    <ligand>
        <name>5-phospho-alpha-D-ribose 1-diphosphate</name>
        <dbReference type="ChEBI" id="CHEBI:58017"/>
    </ligand>
</feature>
<feature type="binding site" evidence="1">
    <location>
        <position position="87"/>
    </location>
    <ligand>
        <name>5-phospho-alpha-D-ribose 1-diphosphate</name>
        <dbReference type="ChEBI" id="CHEBI:58017"/>
    </ligand>
</feature>
<feature type="binding site" evidence="1">
    <location>
        <begin position="89"/>
        <end position="92"/>
    </location>
    <ligand>
        <name>5-phospho-alpha-D-ribose 1-diphosphate</name>
        <dbReference type="ChEBI" id="CHEBI:58017"/>
    </ligand>
</feature>
<feature type="binding site" evidence="1">
    <location>
        <position position="91"/>
    </location>
    <ligand>
        <name>Mg(2+)</name>
        <dbReference type="ChEBI" id="CHEBI:18420"/>
        <label>1</label>
    </ligand>
</feature>
<feature type="binding site" evidence="1">
    <location>
        <begin position="107"/>
        <end position="115"/>
    </location>
    <ligand>
        <name>5-phospho-alpha-D-ribose 1-diphosphate</name>
        <dbReference type="ChEBI" id="CHEBI:58017"/>
    </ligand>
</feature>
<feature type="binding site" evidence="1">
    <location>
        <position position="110"/>
    </location>
    <ligand>
        <name>anthranilate</name>
        <dbReference type="ChEBI" id="CHEBI:16567"/>
        <label>1</label>
    </ligand>
</feature>
<feature type="binding site" evidence="1">
    <location>
        <position position="119"/>
    </location>
    <ligand>
        <name>5-phospho-alpha-D-ribose 1-diphosphate</name>
        <dbReference type="ChEBI" id="CHEBI:58017"/>
    </ligand>
</feature>
<feature type="binding site" evidence="1">
    <location>
        <position position="165"/>
    </location>
    <ligand>
        <name>anthranilate</name>
        <dbReference type="ChEBI" id="CHEBI:16567"/>
        <label>2</label>
    </ligand>
</feature>
<feature type="binding site" evidence="1">
    <location>
        <position position="224"/>
    </location>
    <ligand>
        <name>Mg(2+)</name>
        <dbReference type="ChEBI" id="CHEBI:18420"/>
        <label>2</label>
    </ligand>
</feature>
<feature type="binding site" evidence="1">
    <location>
        <position position="225"/>
    </location>
    <ligand>
        <name>Mg(2+)</name>
        <dbReference type="ChEBI" id="CHEBI:18420"/>
        <label>1</label>
    </ligand>
</feature>
<feature type="binding site" evidence="1">
    <location>
        <position position="225"/>
    </location>
    <ligand>
        <name>Mg(2+)</name>
        <dbReference type="ChEBI" id="CHEBI:18420"/>
        <label>2</label>
    </ligand>
</feature>
<organism>
    <name type="scientific">Syntrophomonas wolfei subsp. wolfei (strain DSM 2245B / Goettingen)</name>
    <dbReference type="NCBI Taxonomy" id="335541"/>
    <lineage>
        <taxon>Bacteria</taxon>
        <taxon>Bacillati</taxon>
        <taxon>Bacillota</taxon>
        <taxon>Clostridia</taxon>
        <taxon>Eubacteriales</taxon>
        <taxon>Syntrophomonadaceae</taxon>
        <taxon>Syntrophomonas</taxon>
    </lineage>
</organism>
<reference key="1">
    <citation type="journal article" date="2010" name="Environ. Microbiol.">
        <title>The genome of Syntrophomonas wolfei: new insights into syntrophic metabolism and biohydrogen production.</title>
        <authorList>
            <person name="Sieber J.R."/>
            <person name="Sims D.R."/>
            <person name="Han C."/>
            <person name="Kim E."/>
            <person name="Lykidis A."/>
            <person name="Lapidus A.L."/>
            <person name="McDonnald E."/>
            <person name="Rohlin L."/>
            <person name="Culley D.E."/>
            <person name="Gunsalus R."/>
            <person name="McInerney M.J."/>
        </authorList>
    </citation>
    <scope>NUCLEOTIDE SEQUENCE [LARGE SCALE GENOMIC DNA]</scope>
    <source>
        <strain>DSM 2245B / Goettingen</strain>
    </source>
</reference>
<gene>
    <name evidence="1" type="primary">trpD</name>
    <name type="ordered locus">Swol_0358</name>
</gene>
<sequence>MFDRYLKSVVEGDYLNSEEAYLTARMLLHEDIPEIKAAAFLSALRTRKESQEELTGFVQALYEEAKMVDCGMEVLDTCGTGGDGLGTFNISTASALVVASCGVAVAKHGNRAVTGKVGSADVLEALGVEVQLEPDEARQLLDKAGITFLFAPHYHPILKQVGGLRRGLGIATIFNFMGPLLNPCRPSYQVLGISDSNLQEAVAGTLQRLGRKRALVVHAFNGMDEISPEGKTRVFDVGEHGLEVFDIDPEELGIGGFSLDAIQGGDATASARLVIKVLQGEPGPYRDTVILNTAAALLTAGRAKNIQEGMQMAAEAIDAGKSMETLQKMISFSRDRILAC</sequence>
<dbReference type="EC" id="2.4.2.18" evidence="1"/>
<dbReference type="EMBL" id="CP000448">
    <property type="protein sequence ID" value="ABI67698.1"/>
    <property type="molecule type" value="Genomic_DNA"/>
</dbReference>
<dbReference type="RefSeq" id="WP_011639806.1">
    <property type="nucleotide sequence ID" value="NC_008346.1"/>
</dbReference>
<dbReference type="SMR" id="Q0B006"/>
<dbReference type="STRING" id="335541.Swol_0358"/>
<dbReference type="KEGG" id="swo:Swol_0358"/>
<dbReference type="eggNOG" id="COG0547">
    <property type="taxonomic scope" value="Bacteria"/>
</dbReference>
<dbReference type="HOGENOM" id="CLU_034315_2_1_9"/>
<dbReference type="OrthoDB" id="9806430at2"/>
<dbReference type="UniPathway" id="UPA00035">
    <property type="reaction ID" value="UER00041"/>
</dbReference>
<dbReference type="Proteomes" id="UP000001968">
    <property type="component" value="Chromosome"/>
</dbReference>
<dbReference type="GO" id="GO:0005829">
    <property type="term" value="C:cytosol"/>
    <property type="evidence" value="ECO:0007669"/>
    <property type="project" value="TreeGrafter"/>
</dbReference>
<dbReference type="GO" id="GO:0004048">
    <property type="term" value="F:anthranilate phosphoribosyltransferase activity"/>
    <property type="evidence" value="ECO:0007669"/>
    <property type="project" value="UniProtKB-UniRule"/>
</dbReference>
<dbReference type="GO" id="GO:0000287">
    <property type="term" value="F:magnesium ion binding"/>
    <property type="evidence" value="ECO:0007669"/>
    <property type="project" value="UniProtKB-UniRule"/>
</dbReference>
<dbReference type="GO" id="GO:0000162">
    <property type="term" value="P:L-tryptophan biosynthetic process"/>
    <property type="evidence" value="ECO:0007669"/>
    <property type="project" value="UniProtKB-UniRule"/>
</dbReference>
<dbReference type="FunFam" id="3.40.1030.10:FF:000002">
    <property type="entry name" value="Anthranilate phosphoribosyltransferase"/>
    <property type="match status" value="1"/>
</dbReference>
<dbReference type="Gene3D" id="3.40.1030.10">
    <property type="entry name" value="Nucleoside phosphorylase/phosphoribosyltransferase catalytic domain"/>
    <property type="match status" value="1"/>
</dbReference>
<dbReference type="Gene3D" id="1.20.970.10">
    <property type="entry name" value="Transferase, Pyrimidine Nucleoside Phosphorylase, Chain C"/>
    <property type="match status" value="1"/>
</dbReference>
<dbReference type="HAMAP" id="MF_00211">
    <property type="entry name" value="TrpD"/>
    <property type="match status" value="1"/>
</dbReference>
<dbReference type="InterPro" id="IPR005940">
    <property type="entry name" value="Anthranilate_Pribosyl_Tfrase"/>
</dbReference>
<dbReference type="InterPro" id="IPR000312">
    <property type="entry name" value="Glycosyl_Trfase_fam3"/>
</dbReference>
<dbReference type="InterPro" id="IPR017459">
    <property type="entry name" value="Glycosyl_Trfase_fam3_N_dom"/>
</dbReference>
<dbReference type="InterPro" id="IPR036320">
    <property type="entry name" value="Glycosyl_Trfase_fam3_N_dom_sf"/>
</dbReference>
<dbReference type="InterPro" id="IPR035902">
    <property type="entry name" value="Nuc_phospho_transferase"/>
</dbReference>
<dbReference type="NCBIfam" id="TIGR01245">
    <property type="entry name" value="trpD"/>
    <property type="match status" value="1"/>
</dbReference>
<dbReference type="PANTHER" id="PTHR43285">
    <property type="entry name" value="ANTHRANILATE PHOSPHORIBOSYLTRANSFERASE"/>
    <property type="match status" value="1"/>
</dbReference>
<dbReference type="PANTHER" id="PTHR43285:SF2">
    <property type="entry name" value="ANTHRANILATE PHOSPHORIBOSYLTRANSFERASE"/>
    <property type="match status" value="1"/>
</dbReference>
<dbReference type="Pfam" id="PF02885">
    <property type="entry name" value="Glycos_trans_3N"/>
    <property type="match status" value="1"/>
</dbReference>
<dbReference type="Pfam" id="PF00591">
    <property type="entry name" value="Glycos_transf_3"/>
    <property type="match status" value="1"/>
</dbReference>
<dbReference type="SUPFAM" id="SSF52418">
    <property type="entry name" value="Nucleoside phosphorylase/phosphoribosyltransferase catalytic domain"/>
    <property type="match status" value="1"/>
</dbReference>
<dbReference type="SUPFAM" id="SSF47648">
    <property type="entry name" value="Nucleoside phosphorylase/phosphoribosyltransferase N-terminal domain"/>
    <property type="match status" value="1"/>
</dbReference>